<sequence>MRRISLTSSPVRLLLFLLLLLIALEIMVGGHSLCFNFTIKSLSRPGQPWCEAQVFLNKNLFLQYNSDNNMVKPLGLLGKKVYATSTWGELTQTLGEVGRDLRMLLCDIKPQIKTSDPSTLQVEMFCQREAERCTGASWQFATNGEKSLLFDAMNMTWTVINHEASKIKETWKKDRGLEKYFRKLSKGDCDHWLREFLGHWEAMPEPTVSPVNASDIHWSSSSLPDRWIILGAFILLVLMGIVLICVWWQNGEWQAGLWPLRTS</sequence>
<dbReference type="EMBL" id="AY069961">
    <property type="protein sequence ID" value="AAL58090.1"/>
    <property type="molecule type" value="mRNA"/>
</dbReference>
<dbReference type="EMBL" id="AY252119">
    <property type="protein sequence ID" value="AAP15166.1"/>
    <property type="molecule type" value="mRNA"/>
</dbReference>
<dbReference type="EMBL" id="AY176317">
    <property type="protein sequence ID" value="AAO22240.1"/>
    <property type="molecule type" value="mRNA"/>
</dbReference>
<dbReference type="EMBL" id="EF489426">
    <property type="protein sequence ID" value="ABR29881.1"/>
    <property type="molecule type" value="mRNA"/>
</dbReference>
<dbReference type="EMBL" id="AY054974">
    <property type="protein sequence ID" value="AAL11005.1"/>
    <property type="molecule type" value="mRNA"/>
</dbReference>
<dbReference type="EMBL" id="AY359075">
    <property type="protein sequence ID" value="AAQ89434.1"/>
    <property type="molecule type" value="mRNA"/>
</dbReference>
<dbReference type="EMBL" id="AL355312">
    <property type="status" value="NOT_ANNOTATED_CDS"/>
    <property type="molecule type" value="Genomic_DNA"/>
</dbReference>
<dbReference type="EMBL" id="AF359243">
    <property type="protein sequence ID" value="AAL76417.1"/>
    <property type="molecule type" value="mRNA"/>
</dbReference>
<dbReference type="CCDS" id="CCDS5221.1">
    <molecule id="Q8TD07-1"/>
</dbReference>
<dbReference type="CCDS" id="CCDS59042.1">
    <molecule id="Q8TD07-4"/>
</dbReference>
<dbReference type="CCDS" id="CCDS59043.1">
    <molecule id="Q8TD07-3"/>
</dbReference>
<dbReference type="CCDS" id="CCDS59044.1">
    <molecule id="Q8TD07-2"/>
</dbReference>
<dbReference type="RefSeq" id="NP_001230254.1">
    <molecule id="Q8TD07-2"/>
    <property type="nucleotide sequence ID" value="NM_001243325.2"/>
</dbReference>
<dbReference type="RefSeq" id="NP_001230256.1">
    <molecule id="Q8TD07-4"/>
    <property type="nucleotide sequence ID" value="NM_001243327.2"/>
</dbReference>
<dbReference type="RefSeq" id="NP_001230257.1">
    <molecule id="Q8TD07-3"/>
    <property type="nucleotide sequence ID" value="NM_001243328.3"/>
</dbReference>
<dbReference type="RefSeq" id="NP_001380986.1">
    <molecule id="Q8TD07-1"/>
    <property type="nucleotide sequence ID" value="NM_001394057.1"/>
</dbReference>
<dbReference type="RefSeq" id="NP_631904.1">
    <molecule id="Q8TD07-1"/>
    <property type="nucleotide sequence ID" value="NM_139165.3"/>
</dbReference>
<dbReference type="RefSeq" id="XP_011533781.1">
    <property type="nucleotide sequence ID" value="XM_011535479.2"/>
</dbReference>
<dbReference type="SMR" id="Q8TD07"/>
<dbReference type="BioGRID" id="126425">
    <property type="interactions" value="26"/>
</dbReference>
<dbReference type="FunCoup" id="Q8TD07">
    <property type="interactions" value="210"/>
</dbReference>
<dbReference type="IntAct" id="Q8TD07">
    <property type="interactions" value="20"/>
</dbReference>
<dbReference type="STRING" id="9606.ENSP00000349709"/>
<dbReference type="GlyCosmos" id="Q8TD07">
    <property type="glycosylation" value="3 sites, No reported glycans"/>
</dbReference>
<dbReference type="GlyGen" id="Q8TD07">
    <property type="glycosylation" value="4 sites, 1 N-linked glycan (1 site)"/>
</dbReference>
<dbReference type="PhosphoSitePlus" id="Q8TD07"/>
<dbReference type="BioMuta" id="RAET1E"/>
<dbReference type="jPOST" id="Q8TD07"/>
<dbReference type="MassIVE" id="Q8TD07"/>
<dbReference type="PaxDb" id="9606-ENSP00000349709"/>
<dbReference type="PeptideAtlas" id="Q8TD07"/>
<dbReference type="ProteomicsDB" id="1774"/>
<dbReference type="ProteomicsDB" id="74206">
    <molecule id="Q8TD07-1"/>
</dbReference>
<dbReference type="ProteomicsDB" id="74207">
    <molecule id="Q8TD07-2"/>
</dbReference>
<dbReference type="ProteomicsDB" id="74208">
    <molecule id="Q8TD07-3"/>
</dbReference>
<dbReference type="Antibodypedia" id="33297">
    <property type="antibodies" value="299 antibodies from 21 providers"/>
</dbReference>
<dbReference type="DNASU" id="135250"/>
<dbReference type="Ensembl" id="ENST00000357183.9">
    <molecule id="Q8TD07-1"/>
    <property type="protein sequence ID" value="ENSP00000349709.4"/>
    <property type="gene ID" value="ENSG00000164520.12"/>
</dbReference>
<dbReference type="Ensembl" id="ENST00000367363.3">
    <molecule id="Q8TD07-2"/>
    <property type="protein sequence ID" value="ENSP00000356332.3"/>
    <property type="gene ID" value="ENSG00000164520.12"/>
</dbReference>
<dbReference type="Ensembl" id="ENST00000529948.1">
    <molecule id="Q8TD07-4"/>
    <property type="protein sequence ID" value="ENSP00000432366.1"/>
    <property type="gene ID" value="ENSG00000164520.12"/>
</dbReference>
<dbReference type="Ensembl" id="ENST00000532335.5">
    <molecule id="Q8TD07-3"/>
    <property type="protein sequence ID" value="ENSP00000437067.1"/>
    <property type="gene ID" value="ENSG00000164520.12"/>
</dbReference>
<dbReference type="GeneID" id="135250"/>
<dbReference type="KEGG" id="hsa:135250"/>
<dbReference type="MANE-Select" id="ENST00000357183.9">
    <property type="protein sequence ID" value="ENSP00000349709.4"/>
    <property type="RefSeq nucleotide sequence ID" value="NM_001394057.1"/>
    <property type="RefSeq protein sequence ID" value="NP_001380986.1"/>
</dbReference>
<dbReference type="UCSC" id="uc003qnj.3">
    <molecule id="Q8TD07-1"/>
    <property type="organism name" value="human"/>
</dbReference>
<dbReference type="AGR" id="HGNC:16793"/>
<dbReference type="CTD" id="135250"/>
<dbReference type="DisGeNET" id="135250"/>
<dbReference type="GeneCards" id="RAET1E"/>
<dbReference type="HGNC" id="HGNC:16793">
    <property type="gene designation" value="RAET1E"/>
</dbReference>
<dbReference type="HPA" id="ENSG00000164520">
    <property type="expression patterns" value="Tissue enhanced (cervix, esophagus, vagina)"/>
</dbReference>
<dbReference type="MIM" id="609243">
    <property type="type" value="gene"/>
</dbReference>
<dbReference type="neXtProt" id="NX_Q8TD07"/>
<dbReference type="OpenTargets" id="ENSG00000164520"/>
<dbReference type="PharmGKB" id="PA134913788"/>
<dbReference type="VEuPathDB" id="HostDB:ENSG00000164520"/>
<dbReference type="eggNOG" id="ENOG502TM6M">
    <property type="taxonomic scope" value="Eukaryota"/>
</dbReference>
<dbReference type="GeneTree" id="ENSGT01130000278293"/>
<dbReference type="HOGENOM" id="CLU_086235_0_0_1"/>
<dbReference type="InParanoid" id="Q8TD07"/>
<dbReference type="OMA" id="ASWHFNI"/>
<dbReference type="OrthoDB" id="9531345at2759"/>
<dbReference type="PAN-GO" id="Q8TD07">
    <property type="GO annotations" value="3 GO annotations based on evolutionary models"/>
</dbReference>
<dbReference type="PhylomeDB" id="Q8TD07"/>
<dbReference type="TreeFam" id="TF339658"/>
<dbReference type="PathwayCommons" id="Q8TD07"/>
<dbReference type="Reactome" id="R-HSA-198933">
    <property type="pathway name" value="Immunoregulatory interactions between a Lymphoid and a non-Lymphoid cell"/>
</dbReference>
<dbReference type="SignaLink" id="Q8TD07"/>
<dbReference type="BioGRID-ORCS" id="135250">
    <property type="hits" value="10 hits in 1141 CRISPR screens"/>
</dbReference>
<dbReference type="GeneWiki" id="RAET1E"/>
<dbReference type="GenomeRNAi" id="135250"/>
<dbReference type="Pharos" id="Q8TD07">
    <property type="development level" value="Tbio"/>
</dbReference>
<dbReference type="PRO" id="PR:Q8TD07"/>
<dbReference type="Proteomes" id="UP000005640">
    <property type="component" value="Chromosome 6"/>
</dbReference>
<dbReference type="RNAct" id="Q8TD07">
    <property type="molecule type" value="protein"/>
</dbReference>
<dbReference type="Bgee" id="ENSG00000164520">
    <property type="expression patterns" value="Expressed in esophagus mucosa and 92 other cell types or tissues"/>
</dbReference>
<dbReference type="ExpressionAtlas" id="Q8TD07">
    <property type="expression patterns" value="baseline and differential"/>
</dbReference>
<dbReference type="GO" id="GO:0009897">
    <property type="term" value="C:external side of plasma membrane"/>
    <property type="evidence" value="ECO:0000318"/>
    <property type="project" value="GO_Central"/>
</dbReference>
<dbReference type="GO" id="GO:0005615">
    <property type="term" value="C:extracellular space"/>
    <property type="evidence" value="ECO:0000318"/>
    <property type="project" value="GO_Central"/>
</dbReference>
<dbReference type="GO" id="GO:0005886">
    <property type="term" value="C:plasma membrane"/>
    <property type="evidence" value="ECO:0000304"/>
    <property type="project" value="Reactome"/>
</dbReference>
<dbReference type="GO" id="GO:0046703">
    <property type="term" value="F:natural killer cell lectin-like receptor binding"/>
    <property type="evidence" value="ECO:0000353"/>
    <property type="project" value="UniProtKB"/>
</dbReference>
<dbReference type="GO" id="GO:0002486">
    <property type="term" value="P:antigen processing and presentation of endogenous peptide antigen via MHC class I via ER pathway, TAP-independent"/>
    <property type="evidence" value="ECO:0000318"/>
    <property type="project" value="GO_Central"/>
</dbReference>
<dbReference type="GO" id="GO:0002476">
    <property type="term" value="P:antigen processing and presentation of endogenous peptide antigen via MHC class Ib"/>
    <property type="evidence" value="ECO:0000318"/>
    <property type="project" value="GO_Central"/>
</dbReference>
<dbReference type="GO" id="GO:0006955">
    <property type="term" value="P:immune response"/>
    <property type="evidence" value="ECO:0000318"/>
    <property type="project" value="GO_Central"/>
</dbReference>
<dbReference type="GO" id="GO:0042267">
    <property type="term" value="P:natural killer cell mediated cytotoxicity"/>
    <property type="evidence" value="ECO:0000314"/>
    <property type="project" value="UniProtKB"/>
</dbReference>
<dbReference type="GO" id="GO:0045954">
    <property type="term" value="P:positive regulation of natural killer cell mediated cytotoxicity"/>
    <property type="evidence" value="ECO:0000314"/>
    <property type="project" value="UniProtKB"/>
</dbReference>
<dbReference type="GO" id="GO:0001916">
    <property type="term" value="P:positive regulation of T cell mediated cytotoxicity"/>
    <property type="evidence" value="ECO:0000318"/>
    <property type="project" value="GO_Central"/>
</dbReference>
<dbReference type="FunFam" id="3.30.500.10:FF:000004">
    <property type="entry name" value="Retinoic acid early-inducible protein 1-beta"/>
    <property type="match status" value="1"/>
</dbReference>
<dbReference type="Gene3D" id="3.30.500.10">
    <property type="entry name" value="MHC class I-like antigen recognition-like"/>
    <property type="match status" value="1"/>
</dbReference>
<dbReference type="InterPro" id="IPR050208">
    <property type="entry name" value="MHC_class-I_related"/>
</dbReference>
<dbReference type="InterPro" id="IPR011161">
    <property type="entry name" value="MHC_I-like_Ag-recog"/>
</dbReference>
<dbReference type="InterPro" id="IPR037055">
    <property type="entry name" value="MHC_I-like_Ag-recog_sf"/>
</dbReference>
<dbReference type="InterPro" id="IPR011162">
    <property type="entry name" value="MHC_I/II-like_Ag-recog"/>
</dbReference>
<dbReference type="PANTHER" id="PTHR16675">
    <property type="entry name" value="MHC CLASS I-RELATED"/>
    <property type="match status" value="1"/>
</dbReference>
<dbReference type="PANTHER" id="PTHR16675:SF64">
    <property type="entry name" value="RETINOIC ACID EARLY TRANSCRIPT 1E"/>
    <property type="match status" value="1"/>
</dbReference>
<dbReference type="Pfam" id="PF00129">
    <property type="entry name" value="MHC_I"/>
    <property type="match status" value="1"/>
</dbReference>
<dbReference type="SUPFAM" id="SSF54452">
    <property type="entry name" value="MHC antigen-recognition domain"/>
    <property type="match status" value="1"/>
</dbReference>
<reference key="1">
    <citation type="journal article" date="2003" name="Cancer Biol. Ther.">
        <title>Letal, a tumor-associated NKG2D immunoreceptor ligand, induces activation and expansion of effector immune cells.</title>
        <authorList>
            <person name="Conejo-Garcia J.-R."/>
            <person name="Benencia F."/>
            <person name="Courreges M.C."/>
            <person name="Khang E."/>
            <person name="Zhang L."/>
            <person name="Mohamed-Hadley A."/>
            <person name="Vinocur J.M."/>
            <person name="Buckanovich R.J."/>
            <person name="Thompson C.B."/>
            <person name="Levine B."/>
            <person name="Coukos G."/>
        </authorList>
    </citation>
    <scope>NUCLEOTIDE SEQUENCE [MRNA] (ISOFORM 1)</scope>
    <scope>TISSUE SPECIFICITY</scope>
    <source>
        <tissue>Ovarian carcinoma</tissue>
    </source>
</reference>
<reference key="2">
    <citation type="journal article" date="2003" name="Biochem. Biophys. Res. Commun.">
        <title>ULBP4 is a novel ligand for human NKG2D.</title>
        <authorList>
            <person name="Chalupny N.J."/>
            <person name="Sutherland C.L."/>
            <person name="Lawrence W.A."/>
            <person name="Rein-Weston A."/>
            <person name="Cosman D."/>
        </authorList>
    </citation>
    <scope>NUCLEOTIDE SEQUENCE [MRNA] (ISOFORM 1)</scope>
    <scope>TISSUE SPECIFICITY</scope>
    <source>
        <tissue>Esophagus</tissue>
    </source>
</reference>
<reference key="3">
    <citation type="journal article" date="2004" name="J. Immunol.">
        <title>Two human ULBP/RAET1 molecules with transmembrane regions are ligands for NKG2D.</title>
        <authorList>
            <person name="Bacon L."/>
            <person name="Eagle R.A."/>
            <person name="Meyer M."/>
            <person name="Easom N."/>
            <person name="Young N.T."/>
            <person name="Trowsdale J."/>
        </authorList>
    </citation>
    <scope>NUCLEOTIDE SEQUENCE [MRNA] (ISOFORM 1)</scope>
    <scope>INTERACTION WITH KLRK1</scope>
    <scope>LACK OF INTERACTION WITH CMV UL16</scope>
    <scope>SUBCELLULAR LOCATION</scope>
</reference>
<reference key="4">
    <citation type="journal article" date="2007" name="J. Biol. Chem.">
        <title>RAET1E2, a soluble isoform of the UL16-binding protein RAET1E produced by tumor cells, inhibits NKG2D-mediated NK cytotoxicity.</title>
        <authorList>
            <person name="Cao W."/>
            <person name="Xi X."/>
            <person name="Hao Z."/>
            <person name="Li W."/>
            <person name="Kong Y."/>
            <person name="Cui L."/>
            <person name="Ma C."/>
            <person name="Ba D."/>
            <person name="He W."/>
        </authorList>
    </citation>
    <scope>NUCLEOTIDE SEQUENCE [MRNA] (ISOFORM 4)</scope>
    <scope>ALTERNATIVE SPLICING</scope>
</reference>
<reference key="5">
    <citation type="submission" date="2001-08" db="EMBL/GenBank/DDBJ databases">
        <title>Homo sapiens RAE-1-like transcript 4 (RL-4) mRNA.</title>
        <authorList>
            <person name="Lanier L.L."/>
            <person name="Cerwenka A."/>
        </authorList>
    </citation>
    <scope>NUCLEOTIDE SEQUENCE [MRNA] (ISOFORM 2)</scope>
</reference>
<reference key="6">
    <citation type="journal article" date="2003" name="Genome Res.">
        <title>The secreted protein discovery initiative (SPDI), a large-scale effort to identify novel human secreted and transmembrane proteins: a bioinformatics assessment.</title>
        <authorList>
            <person name="Clark H.F."/>
            <person name="Gurney A.L."/>
            <person name="Abaya E."/>
            <person name="Baker K."/>
            <person name="Baldwin D.T."/>
            <person name="Brush J."/>
            <person name="Chen J."/>
            <person name="Chow B."/>
            <person name="Chui C."/>
            <person name="Crowley C."/>
            <person name="Currell B."/>
            <person name="Deuel B."/>
            <person name="Dowd P."/>
            <person name="Eaton D."/>
            <person name="Foster J.S."/>
            <person name="Grimaldi C."/>
            <person name="Gu Q."/>
            <person name="Hass P.E."/>
            <person name="Heldens S."/>
            <person name="Huang A."/>
            <person name="Kim H.S."/>
            <person name="Klimowski L."/>
            <person name="Jin Y."/>
            <person name="Johnson S."/>
            <person name="Lee J."/>
            <person name="Lewis L."/>
            <person name="Liao D."/>
            <person name="Mark M.R."/>
            <person name="Robbie E."/>
            <person name="Sanchez C."/>
            <person name="Schoenfeld J."/>
            <person name="Seshagiri S."/>
            <person name="Simmons L."/>
            <person name="Singh J."/>
            <person name="Smith V."/>
            <person name="Stinson J."/>
            <person name="Vagts A."/>
            <person name="Vandlen R.L."/>
            <person name="Watanabe C."/>
            <person name="Wieand D."/>
            <person name="Woods K."/>
            <person name="Xie M.-H."/>
            <person name="Yansura D.G."/>
            <person name="Yi S."/>
            <person name="Yu G."/>
            <person name="Yuan J."/>
            <person name="Zhang M."/>
            <person name="Zhang Z."/>
            <person name="Goddard A.D."/>
            <person name="Wood W.I."/>
            <person name="Godowski P.J."/>
            <person name="Gray A.M."/>
        </authorList>
    </citation>
    <scope>NUCLEOTIDE SEQUENCE [LARGE SCALE MRNA] (ISOFORM 3)</scope>
    <scope>VARIANT ASN-82</scope>
</reference>
<reference key="7">
    <citation type="journal article" date="2003" name="Nature">
        <title>The DNA sequence and analysis of human chromosome 6.</title>
        <authorList>
            <person name="Mungall A.J."/>
            <person name="Palmer S.A."/>
            <person name="Sims S.K."/>
            <person name="Edwards C.A."/>
            <person name="Ashurst J.L."/>
            <person name="Wilming L."/>
            <person name="Jones M.C."/>
            <person name="Horton R."/>
            <person name="Hunt S.E."/>
            <person name="Scott C.E."/>
            <person name="Gilbert J.G.R."/>
            <person name="Clamp M.E."/>
            <person name="Bethel G."/>
            <person name="Milne S."/>
            <person name="Ainscough R."/>
            <person name="Almeida J.P."/>
            <person name="Ambrose K.D."/>
            <person name="Andrews T.D."/>
            <person name="Ashwell R.I.S."/>
            <person name="Babbage A.K."/>
            <person name="Bagguley C.L."/>
            <person name="Bailey J."/>
            <person name="Banerjee R."/>
            <person name="Barker D.J."/>
            <person name="Barlow K.F."/>
            <person name="Bates K."/>
            <person name="Beare D.M."/>
            <person name="Beasley H."/>
            <person name="Beasley O."/>
            <person name="Bird C.P."/>
            <person name="Blakey S.E."/>
            <person name="Bray-Allen S."/>
            <person name="Brook J."/>
            <person name="Brown A.J."/>
            <person name="Brown J.Y."/>
            <person name="Burford D.C."/>
            <person name="Burrill W."/>
            <person name="Burton J."/>
            <person name="Carder C."/>
            <person name="Carter N.P."/>
            <person name="Chapman J.C."/>
            <person name="Clark S.Y."/>
            <person name="Clark G."/>
            <person name="Clee C.M."/>
            <person name="Clegg S."/>
            <person name="Cobley V."/>
            <person name="Collier R.E."/>
            <person name="Collins J.E."/>
            <person name="Colman L.K."/>
            <person name="Corby N.R."/>
            <person name="Coville G.J."/>
            <person name="Culley K.M."/>
            <person name="Dhami P."/>
            <person name="Davies J."/>
            <person name="Dunn M."/>
            <person name="Earthrowl M.E."/>
            <person name="Ellington A.E."/>
            <person name="Evans K.A."/>
            <person name="Faulkner L."/>
            <person name="Francis M.D."/>
            <person name="Frankish A."/>
            <person name="Frankland J."/>
            <person name="French L."/>
            <person name="Garner P."/>
            <person name="Garnett J."/>
            <person name="Ghori M.J."/>
            <person name="Gilby L.M."/>
            <person name="Gillson C.J."/>
            <person name="Glithero R.J."/>
            <person name="Grafham D.V."/>
            <person name="Grant M."/>
            <person name="Gribble S."/>
            <person name="Griffiths C."/>
            <person name="Griffiths M.N.D."/>
            <person name="Hall R."/>
            <person name="Halls K.S."/>
            <person name="Hammond S."/>
            <person name="Harley J.L."/>
            <person name="Hart E.A."/>
            <person name="Heath P.D."/>
            <person name="Heathcott R."/>
            <person name="Holmes S.J."/>
            <person name="Howden P.J."/>
            <person name="Howe K.L."/>
            <person name="Howell G.R."/>
            <person name="Huckle E."/>
            <person name="Humphray S.J."/>
            <person name="Humphries M.D."/>
            <person name="Hunt A.R."/>
            <person name="Johnson C.M."/>
            <person name="Joy A.A."/>
            <person name="Kay M."/>
            <person name="Keenan S.J."/>
            <person name="Kimberley A.M."/>
            <person name="King A."/>
            <person name="Laird G.K."/>
            <person name="Langford C."/>
            <person name="Lawlor S."/>
            <person name="Leongamornlert D.A."/>
            <person name="Leversha M."/>
            <person name="Lloyd C.R."/>
            <person name="Lloyd D.M."/>
            <person name="Loveland J.E."/>
            <person name="Lovell J."/>
            <person name="Martin S."/>
            <person name="Mashreghi-Mohammadi M."/>
            <person name="Maslen G.L."/>
            <person name="Matthews L."/>
            <person name="McCann O.T."/>
            <person name="McLaren S.J."/>
            <person name="McLay K."/>
            <person name="McMurray A."/>
            <person name="Moore M.J.F."/>
            <person name="Mullikin J.C."/>
            <person name="Niblett D."/>
            <person name="Nickerson T."/>
            <person name="Novik K.L."/>
            <person name="Oliver K."/>
            <person name="Overton-Larty E.K."/>
            <person name="Parker A."/>
            <person name="Patel R."/>
            <person name="Pearce A.V."/>
            <person name="Peck A.I."/>
            <person name="Phillimore B.J.C.T."/>
            <person name="Phillips S."/>
            <person name="Plumb R.W."/>
            <person name="Porter K.M."/>
            <person name="Ramsey Y."/>
            <person name="Ranby S.A."/>
            <person name="Rice C.M."/>
            <person name="Ross M.T."/>
            <person name="Searle S.M."/>
            <person name="Sehra H.K."/>
            <person name="Sheridan E."/>
            <person name="Skuce C.D."/>
            <person name="Smith S."/>
            <person name="Smith M."/>
            <person name="Spraggon L."/>
            <person name="Squares S.L."/>
            <person name="Steward C.A."/>
            <person name="Sycamore N."/>
            <person name="Tamlyn-Hall G."/>
            <person name="Tester J."/>
            <person name="Theaker A.J."/>
            <person name="Thomas D.W."/>
            <person name="Thorpe A."/>
            <person name="Tracey A."/>
            <person name="Tromans A."/>
            <person name="Tubby B."/>
            <person name="Wall M."/>
            <person name="Wallis J.M."/>
            <person name="West A.P."/>
            <person name="White S.S."/>
            <person name="Whitehead S.L."/>
            <person name="Whittaker H."/>
            <person name="Wild A."/>
            <person name="Willey D.J."/>
            <person name="Wilmer T.E."/>
            <person name="Wood J.M."/>
            <person name="Wray P.W."/>
            <person name="Wyatt J.C."/>
            <person name="Young L."/>
            <person name="Younger R.M."/>
            <person name="Bentley D.R."/>
            <person name="Coulson A."/>
            <person name="Durbin R.M."/>
            <person name="Hubbard T."/>
            <person name="Sulston J.E."/>
            <person name="Dunham I."/>
            <person name="Rogers J."/>
            <person name="Beck S."/>
        </authorList>
    </citation>
    <scope>NUCLEOTIDE SEQUENCE [LARGE SCALE GENOMIC DNA]</scope>
</reference>
<reference key="8">
    <citation type="journal article" date="2002" name="Genomics">
        <title>A cluster of ten novel MHC class I related genes on human chromosome 6q24.2-q25.3.</title>
        <authorList>
            <person name="Radosavljevic M."/>
            <person name="Cuillerier B."/>
            <person name="Wilson M.J."/>
            <person name="Clement O."/>
            <person name="Wicker S."/>
            <person name="Gilfillan S."/>
            <person name="Beck S."/>
            <person name="Trowsdale J."/>
            <person name="Bahram S."/>
        </authorList>
    </citation>
    <scope>NUCLEOTIDE SEQUENCE [MRNA] OF 1-222 (ISOFORM 1)</scope>
    <scope>VARIANTS ASN-82 AND HIS-128</scope>
</reference>
<reference key="9">
    <citation type="journal article" date="2008" name="Int. Immunol.">
        <title>Four novel ULBP splice variants are ligands for human NKG2D.</title>
        <authorList>
            <person name="Cao W."/>
            <person name="Xi X."/>
            <person name="Wang Z."/>
            <person name="Dong L."/>
            <person name="Hao Z."/>
            <person name="Cui L."/>
            <person name="Ma C."/>
            <person name="He W."/>
        </authorList>
    </citation>
    <scope>ALTERNATIVE SPLICING (ISOFORMS 2; 5 AND 6)</scope>
    <scope>INTERACTION WITH KLRK1</scope>
    <scope>FUNCTION</scope>
    <scope>REGION</scope>
    <scope>DOMAIN</scope>
</reference>
<keyword id="KW-0025">Alternative splicing</keyword>
<keyword id="KW-1015">Disulfide bond</keyword>
<keyword id="KW-0325">Glycoprotein</keyword>
<keyword id="KW-0391">Immunity</keyword>
<keyword id="KW-0472">Membrane</keyword>
<keyword id="KW-1267">Proteomics identification</keyword>
<keyword id="KW-1185">Reference proteome</keyword>
<keyword id="KW-0964">Secreted</keyword>
<keyword id="KW-0732">Signal</keyword>
<keyword id="KW-0812">Transmembrane</keyword>
<keyword id="KW-1133">Transmembrane helix</keyword>
<organism>
    <name type="scientific">Homo sapiens</name>
    <name type="common">Human</name>
    <dbReference type="NCBI Taxonomy" id="9606"/>
    <lineage>
        <taxon>Eukaryota</taxon>
        <taxon>Metazoa</taxon>
        <taxon>Chordata</taxon>
        <taxon>Craniata</taxon>
        <taxon>Vertebrata</taxon>
        <taxon>Euteleostomi</taxon>
        <taxon>Mammalia</taxon>
        <taxon>Eutheria</taxon>
        <taxon>Euarchontoglires</taxon>
        <taxon>Primates</taxon>
        <taxon>Haplorrhini</taxon>
        <taxon>Catarrhini</taxon>
        <taxon>Hominidae</taxon>
        <taxon>Homo</taxon>
    </lineage>
</organism>
<feature type="signal peptide" evidence="2">
    <location>
        <begin position="1"/>
        <end position="30"/>
    </location>
</feature>
<feature type="chain" id="PRO_0000019021" description="Retinoic acid early transcript 1E">
    <location>
        <begin position="31"/>
        <end position="263"/>
    </location>
</feature>
<feature type="topological domain" description="Extracellular" evidence="2">
    <location>
        <begin position="31"/>
        <end position="225"/>
    </location>
</feature>
<feature type="transmembrane region" description="Helical" evidence="2">
    <location>
        <begin position="226"/>
        <end position="248"/>
    </location>
</feature>
<feature type="topological domain" description="Cytoplasmic" evidence="2">
    <location>
        <begin position="249"/>
        <end position="263"/>
    </location>
</feature>
<feature type="region of interest" description="MHC class I alpha-1 like; down-regulates the cell surface expression of KLRK1" evidence="8">
    <location>
        <begin position="31"/>
        <end position="116"/>
    </location>
</feature>
<feature type="region of interest" description="MHC class I alpha-2 like; down-regulates the cell surface expression of KLRK1" evidence="8">
    <location>
        <begin position="117"/>
        <end position="207"/>
    </location>
</feature>
<feature type="glycosylation site" description="N-linked (GlcNAc...) asparagine" evidence="2">
    <location>
        <position position="36"/>
    </location>
</feature>
<feature type="glycosylation site" description="N-linked (GlcNAc...) asparagine" evidence="2">
    <location>
        <position position="154"/>
    </location>
</feature>
<feature type="glycosylation site" description="N-linked (GlcNAc...) asparagine" evidence="2">
    <location>
        <position position="212"/>
    </location>
</feature>
<feature type="disulfide bond" evidence="1">
    <location>
        <begin position="126"/>
        <end position="189"/>
    </location>
</feature>
<feature type="splice variant" id="VSP_010441" description="In isoform 2." evidence="16">
    <location>
        <begin position="28"/>
        <end position="63"/>
    </location>
</feature>
<feature type="splice variant" id="VSP_059262" description="In isoform 6." evidence="15">
    <original>G</original>
    <variation>GECPEHKNWLRTRRREKG</variation>
    <location>
        <position position="29"/>
    </location>
</feature>
<feature type="splice variant" id="VSP_059263" description="In isoform 5." evidence="15">
    <original>SKIKETWKKDRGLEKYFRKLSKGDCDHWLREFLGHWEAMPEPTV</original>
    <variation>M</variation>
    <location>
        <begin position="165"/>
        <end position="208"/>
    </location>
</feature>
<feature type="splice variant" id="VSP_045012" description="In isoform 4." evidence="14">
    <original>VSPVNASDIHWSSSSLPDRWIILGAFILLVLMGIVLICVWWQNGEWQAGLWPLRTS</original>
    <variation>GN</variation>
    <location>
        <begin position="208"/>
        <end position="263"/>
    </location>
</feature>
<feature type="splice variant" id="VSP_010442" description="In isoform 3." evidence="11">
    <original>VSPVN</original>
    <variation>GRRST</variation>
    <location>
        <begin position="208"/>
        <end position="212"/>
    </location>
</feature>
<feature type="splice variant" id="VSP_010443" description="In isoform 3." evidence="11">
    <location>
        <begin position="213"/>
        <end position="263"/>
    </location>
</feature>
<feature type="sequence variant" id="VAR_024534" description="In dbSNP:rs9383583.">
    <original>R</original>
    <variation>H</variation>
    <location>
        <position position="12"/>
    </location>
</feature>
<feature type="sequence variant" id="VAR_020271" description="In dbSNP:rs2151910." evidence="3 5">
    <original>Y</original>
    <variation>N</variation>
    <location>
        <position position="82"/>
    </location>
</feature>
<feature type="sequence variant" id="VAR_024535" description="In dbSNP:rs6925151." evidence="3">
    <original>R</original>
    <variation>H</variation>
    <location>
        <position position="128"/>
    </location>
</feature>
<feature type="sequence variant" id="VAR_050408" description="In dbSNP:rs9383921.">
    <original>A</original>
    <variation>T</variation>
    <location>
        <position position="141"/>
    </location>
</feature>
<feature type="sequence variant" id="VAR_050409" description="In dbSNP:rs9371533.">
    <original>T</original>
    <variation>I</variation>
    <location>
        <position position="142"/>
    </location>
</feature>
<feature type="sequence variant" id="VAR_061483" description="In dbSNP:rs57292884.">
    <original>R</original>
    <variation>G</variation>
    <location>
        <position position="194"/>
    </location>
</feature>
<feature type="sequence variant" id="VAR_024536" description="In dbSNP:rs2342767.">
    <original>V</original>
    <variation>L</variation>
    <location>
        <position position="237"/>
    </location>
</feature>
<feature type="sequence conflict" description="In Ref. 8; AAL76417." evidence="17" ref="8">
    <original>AT</original>
    <variation>TI</variation>
    <location>
        <begin position="141"/>
        <end position="142"/>
    </location>
</feature>
<comment type="function">
    <text evidence="7 8">Binds and activates the KLRK1/NKG2D receptor, mediating natural killer cell cytotoxicity.</text>
</comment>
<comment type="subunit">
    <text evidence="7 8">Binds to KLRK1/NKG2D.</text>
</comment>
<comment type="subunit">
    <text evidence="7">(Microbial infection) Contrary to other family members, does not interact with CMV glycoprotein UL16.</text>
</comment>
<comment type="interaction">
    <interactant intactId="EBI-16365677">
        <id>Q8TD07</id>
    </interactant>
    <interactant intactId="EBI-458344">
        <id>P26718</id>
        <label>KLRK1</label>
    </interactant>
    <organismsDiffer>false</organismsDiffer>
    <experiments>4</experiments>
</comment>
<comment type="interaction">
    <interactant intactId="EBI-16747021">
        <id>Q8TD07-1</id>
    </interactant>
    <interactant intactId="EBI-458344">
        <id>P26718</id>
        <label>KLRK1</label>
    </interactant>
    <organismsDiffer>false</organismsDiffer>
    <experiments>2</experiments>
</comment>
<comment type="interaction">
    <interactant intactId="EBI-16417277">
        <id>Q8TD07-2</id>
    </interactant>
    <interactant intactId="EBI-458344">
        <id>P26718</id>
        <label>KLRK1</label>
    </interactant>
    <organismsDiffer>false</organismsDiffer>
    <experiments>2</experiments>
</comment>
<comment type="interaction">
    <interactant intactId="EBI-16747044">
        <id>Q8TD07-5</id>
    </interactant>
    <interactant intactId="EBI-458344">
        <id>P26718</id>
        <label>KLRK1</label>
    </interactant>
    <organismsDiffer>false</organismsDiffer>
    <experiments>2</experiments>
</comment>
<comment type="interaction">
    <interactant intactId="EBI-16747033">
        <id>Q8TD07-6</id>
    </interactant>
    <interactant intactId="EBI-458344">
        <id>P26718</id>
        <label>KLRK1</label>
    </interactant>
    <organismsDiffer>false</organismsDiffer>
    <experiments>2</experiments>
</comment>
<comment type="subcellular location">
    <subcellularLocation>
        <location evidence="7">Membrane</location>
        <topology>Single-pass type I membrane protein</topology>
    </subcellularLocation>
</comment>
<comment type="subcellular location">
    <molecule>Isoform 4</molecule>
    <subcellularLocation>
        <location>Secreted</location>
    </subcellularLocation>
</comment>
<comment type="alternative products">
    <event type="alternative splicing"/>
    <isoform>
        <id>Q8TD07-1</id>
        <name>1</name>
        <name evidence="10">ULBP4</name>
        <name evidence="13">RAET1E</name>
        <sequence type="displayed"/>
    </isoform>
    <isoform>
        <id>Q8TD07-2</id>
        <name>2</name>
        <name evidence="16">RL-4</name>
        <name evidence="15">ULBP4-II</name>
        <sequence type="described" ref="VSP_010441"/>
    </isoform>
    <isoform>
        <id>Q8TD07-3</id>
        <name>3</name>
        <sequence type="described" ref="VSP_010442 VSP_010443"/>
    </isoform>
    <isoform>
        <id>Q8TD07-4</id>
        <name>4</name>
        <name evidence="14">RAET1E2</name>
        <sequence type="described" ref="VSP_045012"/>
    </isoform>
    <isoform>
        <id>Q8TD07-5</id>
        <name>5</name>
        <name evidence="15">ULBP4-III</name>
        <sequence type="described" ref="VSP_059263"/>
    </isoform>
    <isoform>
        <id>Q8TD07-6</id>
        <name>6</name>
        <name evidence="15">ULBP4-I</name>
        <sequence type="described" ref="VSP_059262"/>
    </isoform>
</comment>
<comment type="tissue specificity">
    <text evidence="4 6">Predominantly expressed in the skin, but also expressed in testis and trachea. Up-regulated in tumor cells of different origins. Expression progressively decreased after treatment of tumor cells with retinoic acid.</text>
</comment>
<comment type="domain">
    <text evidence="8">MHC class I alpha-1 like and MHC class I alpha- like regions down-regulate the cell surface expression of KLRK1.</text>
</comment>
<comment type="miscellaneous">
    <text evidence="17">UL16-binding proteins (ULBPs) are unusual members of the extended MHC class I superfamily. They do not contain the alpha 3 domain and lack a transmembrane domain.</text>
</comment>
<comment type="similarity">
    <text evidence="17">Belongs to the MHC class I family.</text>
</comment>
<comment type="caution">
    <text evidence="7">Contrary to other family members, does not interact with CMV glycoprotein UL16.</text>
</comment>
<accession>Q8TD07</accession>
<accession>A6YF59</accession>
<accession>Q5VYB7</accession>
<accession>Q5VYB8</accession>
<accession>Q8TEZ2</accession>
<accession>Q96L41</accession>
<proteinExistence type="evidence at protein level"/>
<protein>
    <recommendedName>
        <fullName evidence="9 18">Retinoic acid early transcript 1E</fullName>
    </recommendedName>
    <alternativeName>
        <fullName evidence="12">Lymphocyte effector toxicity activation ligand</fullName>
    </alternativeName>
    <alternativeName>
        <fullName>NKG2D ligand 4</fullName>
        <shortName>N2DL-4</shortName>
        <shortName>NKG2DL4</shortName>
    </alternativeName>
    <alternativeName>
        <fullName evidence="16">RAE-1-like transcript 4</fullName>
    </alternativeName>
    <alternativeName>
        <fullName>UL16-binding protein 4</fullName>
    </alternativeName>
</protein>
<gene>
    <name evidence="9 18" type="primary">RAET1E</name>
    <name evidence="12" type="synonym">LETAL</name>
    <name type="synonym">N2DL4</name>
    <name evidence="10" type="synonym">ULBP4</name>
    <name evidence="11" type="ORF">UNQ1867/PRO4303</name>
</gene>
<evidence type="ECO:0000250" key="1"/>
<evidence type="ECO:0000255" key="2"/>
<evidence type="ECO:0000269" key="3">
    <source>
    </source>
</evidence>
<evidence type="ECO:0000269" key="4">
    <source>
    </source>
</evidence>
<evidence type="ECO:0000269" key="5">
    <source>
    </source>
</evidence>
<evidence type="ECO:0000269" key="6">
    <source>
    </source>
</evidence>
<evidence type="ECO:0000269" key="7">
    <source>
    </source>
</evidence>
<evidence type="ECO:0000269" key="8">
    <source>
    </source>
</evidence>
<evidence type="ECO:0000303" key="9">
    <source>
    </source>
</evidence>
<evidence type="ECO:0000303" key="10">
    <source>
    </source>
</evidence>
<evidence type="ECO:0000303" key="11">
    <source>
    </source>
</evidence>
<evidence type="ECO:0000303" key="12">
    <source>
    </source>
</evidence>
<evidence type="ECO:0000303" key="13">
    <source>
    </source>
</evidence>
<evidence type="ECO:0000303" key="14">
    <source>
    </source>
</evidence>
<evidence type="ECO:0000303" key="15">
    <source>
    </source>
</evidence>
<evidence type="ECO:0000303" key="16">
    <source ref="5"/>
</evidence>
<evidence type="ECO:0000305" key="17"/>
<evidence type="ECO:0000312" key="18">
    <source>
        <dbReference type="HGNC" id="HGNC:16793"/>
    </source>
</evidence>
<name>RAE1E_HUMAN</name>